<keyword id="KW-1185">Reference proteome</keyword>
<protein>
    <recommendedName>
        <fullName>Uncharacterized protein MT1576</fullName>
    </recommendedName>
</protein>
<gene>
    <name type="primary">wbbL2</name>
    <name type="ordered locus">MT1576</name>
</gene>
<name>Y1525_MYCTO</name>
<proteinExistence type="predicted"/>
<feature type="chain" id="PRO_0000427414" description="Uncharacterized protein MT1576">
    <location>
        <begin position="1"/>
        <end position="261"/>
    </location>
</feature>
<organism>
    <name type="scientific">Mycobacterium tuberculosis (strain CDC 1551 / Oshkosh)</name>
    <dbReference type="NCBI Taxonomy" id="83331"/>
    <lineage>
        <taxon>Bacteria</taxon>
        <taxon>Bacillati</taxon>
        <taxon>Actinomycetota</taxon>
        <taxon>Actinomycetes</taxon>
        <taxon>Mycobacteriales</taxon>
        <taxon>Mycobacteriaceae</taxon>
        <taxon>Mycobacterium</taxon>
        <taxon>Mycobacterium tuberculosis complex</taxon>
    </lineage>
</organism>
<dbReference type="EMBL" id="AE000516">
    <property type="protein sequence ID" value="AAK45843.1"/>
    <property type="molecule type" value="Genomic_DNA"/>
</dbReference>
<dbReference type="PIR" id="E70723">
    <property type="entry name" value="E70723"/>
</dbReference>
<dbReference type="RefSeq" id="WP_003407672.1">
    <property type="nucleotide sequence ID" value="NZ_KK341227.1"/>
</dbReference>
<dbReference type="SMR" id="P9WLV2"/>
<dbReference type="CAZy" id="GT2">
    <property type="family name" value="Glycosyltransferase Family 2"/>
</dbReference>
<dbReference type="KEGG" id="mtc:MT1576"/>
<dbReference type="PATRIC" id="fig|83331.31.peg.1698"/>
<dbReference type="HOGENOM" id="CLU_1089142_0_0_11"/>
<dbReference type="Proteomes" id="UP000001020">
    <property type="component" value="Chromosome"/>
</dbReference>
<dbReference type="CDD" id="cd04186">
    <property type="entry name" value="GT_2_like_c"/>
    <property type="match status" value="1"/>
</dbReference>
<dbReference type="Gene3D" id="3.90.550.10">
    <property type="entry name" value="Spore Coat Polysaccharide Biosynthesis Protein SpsA, Chain A"/>
    <property type="match status" value="1"/>
</dbReference>
<dbReference type="InterPro" id="IPR029044">
    <property type="entry name" value="Nucleotide-diphossugar_trans"/>
</dbReference>
<dbReference type="PANTHER" id="PTHR43179:SF11">
    <property type="entry name" value="GLYCOSYL TRANSFERASE"/>
    <property type="match status" value="1"/>
</dbReference>
<dbReference type="PANTHER" id="PTHR43179">
    <property type="entry name" value="RHAMNOSYLTRANSFERASE WBBL"/>
    <property type="match status" value="1"/>
</dbReference>
<dbReference type="SUPFAM" id="SSF53448">
    <property type="entry name" value="Nucleotide-diphospho-sugar transferases"/>
    <property type="match status" value="1"/>
</dbReference>
<sequence>MYAPLVSLMITVPVFGQHEYTHALVADLEREGADYLIVDNRGDYPRIGTERVSTPGENLGWAGGSELGFRLAFAEGYSHAMTLNNDTRVSKGFVAALLDSRLPADAGMVGPMFDVGFPFAVADEKPDAESYVPRARYRKVPAVEGTALVMSRDCWDAVGGMDLSTFGRYGWGLDLDLALRARKSGYGLYTTEMAYINHFGRKTANTHFGGHRYHWGASAAMIRGLRRTHGWPAAMGILREMGMAHHRKWHKSFPLTCPASC</sequence>
<accession>P9WLV2</accession>
<accession>L0T9P3</accession>
<accession>P64867</accession>
<accession>Q50582</accession>
<reference key="1">
    <citation type="journal article" date="2002" name="J. Bacteriol.">
        <title>Whole-genome comparison of Mycobacterium tuberculosis clinical and laboratory strains.</title>
        <authorList>
            <person name="Fleischmann R.D."/>
            <person name="Alland D."/>
            <person name="Eisen J.A."/>
            <person name="Carpenter L."/>
            <person name="White O."/>
            <person name="Peterson J.D."/>
            <person name="DeBoy R.T."/>
            <person name="Dodson R.J."/>
            <person name="Gwinn M.L."/>
            <person name="Haft D.H."/>
            <person name="Hickey E.K."/>
            <person name="Kolonay J.F."/>
            <person name="Nelson W.C."/>
            <person name="Umayam L.A."/>
            <person name="Ermolaeva M.D."/>
            <person name="Salzberg S.L."/>
            <person name="Delcher A."/>
            <person name="Utterback T.R."/>
            <person name="Weidman J.F."/>
            <person name="Khouri H.M."/>
            <person name="Gill J."/>
            <person name="Mikula A."/>
            <person name="Bishai W."/>
            <person name="Jacobs W.R. Jr."/>
            <person name="Venter J.C."/>
            <person name="Fraser C.M."/>
        </authorList>
    </citation>
    <scope>NUCLEOTIDE SEQUENCE [LARGE SCALE GENOMIC DNA]</scope>
    <source>
        <strain>CDC 1551 / Oshkosh</strain>
    </source>
</reference>